<accession>Q58330</accession>
<protein>
    <recommendedName>
        <fullName>Uncharacterized protein MJ0920</fullName>
    </recommendedName>
</protein>
<dbReference type="EMBL" id="L77117">
    <property type="protein sequence ID" value="AAB98924.1"/>
    <property type="molecule type" value="Genomic_DNA"/>
</dbReference>
<dbReference type="PIR" id="H64414">
    <property type="entry name" value="H64414"/>
</dbReference>
<dbReference type="RefSeq" id="WP_010870434.1">
    <property type="nucleotide sequence ID" value="NC_000909.1"/>
</dbReference>
<dbReference type="SMR" id="Q58330"/>
<dbReference type="STRING" id="243232.MJ_0920"/>
<dbReference type="PaxDb" id="243232-MJ_0920"/>
<dbReference type="EnsemblBacteria" id="AAB98924">
    <property type="protein sequence ID" value="AAB98924"/>
    <property type="gene ID" value="MJ_0920"/>
</dbReference>
<dbReference type="GeneID" id="1451809"/>
<dbReference type="KEGG" id="mja:MJ_0920"/>
<dbReference type="eggNOG" id="arCOG00354">
    <property type="taxonomic scope" value="Archaea"/>
</dbReference>
<dbReference type="HOGENOM" id="CLU_1472124_0_0_2"/>
<dbReference type="InParanoid" id="Q58330"/>
<dbReference type="OrthoDB" id="84946at2157"/>
<dbReference type="PhylomeDB" id="Q58330"/>
<dbReference type="Proteomes" id="UP000000805">
    <property type="component" value="Chromosome"/>
</dbReference>
<dbReference type="GO" id="GO:0005525">
    <property type="term" value="F:GTP binding"/>
    <property type="evidence" value="ECO:0007669"/>
    <property type="project" value="InterPro"/>
</dbReference>
<dbReference type="CDD" id="cd00880">
    <property type="entry name" value="Era_like"/>
    <property type="match status" value="1"/>
</dbReference>
<dbReference type="Gene3D" id="3.40.50.300">
    <property type="entry name" value="P-loop containing nucleotide triphosphate hydrolases"/>
    <property type="match status" value="1"/>
</dbReference>
<dbReference type="InterPro" id="IPR006073">
    <property type="entry name" value="GTP-bd"/>
</dbReference>
<dbReference type="InterPro" id="IPR027417">
    <property type="entry name" value="P-loop_NTPase"/>
</dbReference>
<dbReference type="InterPro" id="IPR005225">
    <property type="entry name" value="Small_GTP-bd"/>
</dbReference>
<dbReference type="NCBIfam" id="TIGR00231">
    <property type="entry name" value="small_GTP"/>
    <property type="match status" value="1"/>
</dbReference>
<dbReference type="PANTHER" id="PTHR42714">
    <property type="entry name" value="TRNA MODIFICATION GTPASE GTPBP3"/>
    <property type="match status" value="1"/>
</dbReference>
<dbReference type="PANTHER" id="PTHR42714:SF2">
    <property type="entry name" value="TRNA MODIFICATION GTPASE GTPBP3, MITOCHONDRIAL"/>
    <property type="match status" value="1"/>
</dbReference>
<dbReference type="Pfam" id="PF01926">
    <property type="entry name" value="MMR_HSR1"/>
    <property type="match status" value="1"/>
</dbReference>
<dbReference type="PRINTS" id="PR00449">
    <property type="entry name" value="RASTRNSFRMNG"/>
</dbReference>
<dbReference type="SUPFAM" id="SSF52540">
    <property type="entry name" value="P-loop containing nucleoside triphosphate hydrolases"/>
    <property type="match status" value="1"/>
</dbReference>
<sequence>MQDKEFKIAIIGPENAGKSSIMNALFGKYVSLVSEVGGTTKMPIKRYWGKLKIGRIKEEPEFVNLVFVDLGGLYTTTDKQSPIMTPKVLEKTFEEINDSDMIIHVIDGSVGLLRSFERLHHLLKFRYQKPIIVVINKCDLLNDSDKEHLKNYVERRIKNTPIFVSAKTFEGIPELLDIIIKYLKR</sequence>
<proteinExistence type="predicted"/>
<reference key="1">
    <citation type="journal article" date="1996" name="Science">
        <title>Complete genome sequence of the methanogenic archaeon, Methanococcus jannaschii.</title>
        <authorList>
            <person name="Bult C.J."/>
            <person name="White O."/>
            <person name="Olsen G.J."/>
            <person name="Zhou L."/>
            <person name="Fleischmann R.D."/>
            <person name="Sutton G.G."/>
            <person name="Blake J.A."/>
            <person name="FitzGerald L.M."/>
            <person name="Clayton R.A."/>
            <person name="Gocayne J.D."/>
            <person name="Kerlavage A.R."/>
            <person name="Dougherty B.A."/>
            <person name="Tomb J.-F."/>
            <person name="Adams M.D."/>
            <person name="Reich C.I."/>
            <person name="Overbeek R."/>
            <person name="Kirkness E.F."/>
            <person name="Weinstock K.G."/>
            <person name="Merrick J.M."/>
            <person name="Glodek A."/>
            <person name="Scott J.L."/>
            <person name="Geoghagen N.S.M."/>
            <person name="Weidman J.F."/>
            <person name="Fuhrmann J.L."/>
            <person name="Nguyen D."/>
            <person name="Utterback T.R."/>
            <person name="Kelley J.M."/>
            <person name="Peterson J.D."/>
            <person name="Sadow P.W."/>
            <person name="Hanna M.C."/>
            <person name="Cotton M.D."/>
            <person name="Roberts K.M."/>
            <person name="Hurst M.A."/>
            <person name="Kaine B.P."/>
            <person name="Borodovsky M."/>
            <person name="Klenk H.-P."/>
            <person name="Fraser C.M."/>
            <person name="Smith H.O."/>
            <person name="Woese C.R."/>
            <person name="Venter J.C."/>
        </authorList>
    </citation>
    <scope>NUCLEOTIDE SEQUENCE [LARGE SCALE GENOMIC DNA]</scope>
    <source>
        <strain>ATCC 43067 / DSM 2661 / JAL-1 / JCM 10045 / NBRC 100440</strain>
    </source>
</reference>
<gene>
    <name type="ordered locus">MJ0920</name>
</gene>
<organism>
    <name type="scientific">Methanocaldococcus jannaschii (strain ATCC 43067 / DSM 2661 / JAL-1 / JCM 10045 / NBRC 100440)</name>
    <name type="common">Methanococcus jannaschii</name>
    <dbReference type="NCBI Taxonomy" id="243232"/>
    <lineage>
        <taxon>Archaea</taxon>
        <taxon>Methanobacteriati</taxon>
        <taxon>Methanobacteriota</taxon>
        <taxon>Methanomada group</taxon>
        <taxon>Methanococci</taxon>
        <taxon>Methanococcales</taxon>
        <taxon>Methanocaldococcaceae</taxon>
        <taxon>Methanocaldococcus</taxon>
    </lineage>
</organism>
<name>Y920_METJA</name>
<keyword id="KW-1185">Reference proteome</keyword>
<feature type="chain" id="PRO_0000107105" description="Uncharacterized protein MJ0920">
    <location>
        <begin position="1"/>
        <end position="185"/>
    </location>
</feature>
<feature type="domain" description="G">
    <location>
        <begin position="17"/>
        <end position="137"/>
    </location>
</feature>